<organism>
    <name type="scientific">Thermus thermophilus (strain ATCC BAA-163 / DSM 7039 / HB27)</name>
    <dbReference type="NCBI Taxonomy" id="262724"/>
    <lineage>
        <taxon>Bacteria</taxon>
        <taxon>Thermotogati</taxon>
        <taxon>Deinococcota</taxon>
        <taxon>Deinococci</taxon>
        <taxon>Thermales</taxon>
        <taxon>Thermaceae</taxon>
        <taxon>Thermus</taxon>
    </lineage>
</organism>
<protein>
    <recommendedName>
        <fullName evidence="1">Ribosomal RNA small subunit methyltransferase G</fullName>
        <ecNumber evidence="1">2.1.1.-</ecNumber>
    </recommendedName>
    <alternativeName>
        <fullName evidence="1">16S rRNA 7-methylguanosine methyltransferase</fullName>
        <shortName evidence="1">16S rRNA m7G methyltransferase</shortName>
    </alternativeName>
</protein>
<accession>Q72H89</accession>
<gene>
    <name evidence="1" type="primary">rsmG</name>
    <name type="ordered locus">TT_C1606</name>
</gene>
<proteinExistence type="inferred from homology"/>
<evidence type="ECO:0000255" key="1">
    <source>
        <dbReference type="HAMAP-Rule" id="MF_00074"/>
    </source>
</evidence>
<keyword id="KW-0963">Cytoplasm</keyword>
<keyword id="KW-0489">Methyltransferase</keyword>
<keyword id="KW-0698">rRNA processing</keyword>
<keyword id="KW-0949">S-adenosyl-L-methionine</keyword>
<keyword id="KW-0808">Transferase</keyword>
<reference key="1">
    <citation type="journal article" date="2004" name="Nat. Biotechnol.">
        <title>The genome sequence of the extreme thermophile Thermus thermophilus.</title>
        <authorList>
            <person name="Henne A."/>
            <person name="Brueggemann H."/>
            <person name="Raasch C."/>
            <person name="Wiezer A."/>
            <person name="Hartsch T."/>
            <person name="Liesegang H."/>
            <person name="Johann A."/>
            <person name="Lienard T."/>
            <person name="Gohl O."/>
            <person name="Martinez-Arias R."/>
            <person name="Jacobi C."/>
            <person name="Starkuviene V."/>
            <person name="Schlenczeck S."/>
            <person name="Dencker S."/>
            <person name="Huber R."/>
            <person name="Klenk H.-P."/>
            <person name="Kramer W."/>
            <person name="Merkl R."/>
            <person name="Gottschalk G."/>
            <person name="Fritz H.-J."/>
        </authorList>
    </citation>
    <scope>NUCLEOTIDE SEQUENCE [LARGE SCALE GENOMIC DNA]</scope>
    <source>
        <strain>ATCC BAA-163 / DSM 7039 / HB27</strain>
    </source>
</reference>
<feature type="chain" id="PRO_0000184357" description="Ribosomal RNA small subunit methyltransferase G">
    <location>
        <begin position="1"/>
        <end position="249"/>
    </location>
</feature>
<feature type="binding site" evidence="1">
    <location>
        <position position="88"/>
    </location>
    <ligand>
        <name>S-adenosyl-L-methionine</name>
        <dbReference type="ChEBI" id="CHEBI:59789"/>
    </ligand>
</feature>
<feature type="binding site" evidence="1">
    <location>
        <position position="93"/>
    </location>
    <ligand>
        <name>S-adenosyl-L-methionine</name>
        <dbReference type="ChEBI" id="CHEBI:59789"/>
    </ligand>
</feature>
<feature type="binding site" evidence="1">
    <location>
        <begin position="111"/>
        <end position="113"/>
    </location>
    <ligand>
        <name>S-adenosyl-L-methionine</name>
        <dbReference type="ChEBI" id="CHEBI:59789"/>
    </ligand>
</feature>
<feature type="binding site" evidence="1">
    <location>
        <begin position="139"/>
        <end position="140"/>
    </location>
    <ligand>
        <name>S-adenosyl-L-methionine</name>
        <dbReference type="ChEBI" id="CHEBI:59789"/>
    </ligand>
</feature>
<feature type="binding site" evidence="1">
    <location>
        <position position="158"/>
    </location>
    <ligand>
        <name>S-adenosyl-L-methionine</name>
        <dbReference type="ChEBI" id="CHEBI:59789"/>
    </ligand>
</feature>
<comment type="function">
    <text evidence="1">Specifically methylates the N7 position of a guanine in 16S rRNA.</text>
</comment>
<comment type="subcellular location">
    <subcellularLocation>
        <location evidence="1">Cytoplasm</location>
    </subcellularLocation>
</comment>
<comment type="similarity">
    <text evidence="1">Belongs to the methyltransferase superfamily. RNA methyltransferase RsmG family.</text>
</comment>
<name>RSMG_THET2</name>
<sequence length="249" mass="26944">MFHGKHPEGLSERGRALLLEGGKALGLDLKPHLEAFSRLYALLQEASGKVNLTALRGEEEVVVKHFLDSLTLLRLPLWQGPLRVLDLGTGAGFPGLPLKIVRPELELVLVDATRKKVAFVERAIEVLGLKGARALWGRAEVLAREAGHREAYDRAVARAVAPLCVLSELLLPFLEVGGAAVAMKGPRVEEELAPLPPALERLGGRLGEVLALQLPLSGEARHLVVLEKAAPTPPAYPRRPGVPERYPLC</sequence>
<dbReference type="EC" id="2.1.1.-" evidence="1"/>
<dbReference type="EMBL" id="AE017221">
    <property type="protein sequence ID" value="AAS81948.1"/>
    <property type="molecule type" value="Genomic_DNA"/>
</dbReference>
<dbReference type="RefSeq" id="WP_011173977.1">
    <property type="nucleotide sequence ID" value="NC_005835.1"/>
</dbReference>
<dbReference type="SMR" id="Q72H89"/>
<dbReference type="KEGG" id="tth:TT_C1606"/>
<dbReference type="eggNOG" id="COG0357">
    <property type="taxonomic scope" value="Bacteria"/>
</dbReference>
<dbReference type="HOGENOM" id="CLU_065341_0_1_0"/>
<dbReference type="OrthoDB" id="9808773at2"/>
<dbReference type="Proteomes" id="UP000000592">
    <property type="component" value="Chromosome"/>
</dbReference>
<dbReference type="GO" id="GO:0005829">
    <property type="term" value="C:cytosol"/>
    <property type="evidence" value="ECO:0007669"/>
    <property type="project" value="TreeGrafter"/>
</dbReference>
<dbReference type="GO" id="GO:0070043">
    <property type="term" value="F:rRNA (guanine-N7-)-methyltransferase activity"/>
    <property type="evidence" value="ECO:0007669"/>
    <property type="project" value="UniProtKB-UniRule"/>
</dbReference>
<dbReference type="FunFam" id="3.40.50.150:FF:000041">
    <property type="entry name" value="Ribosomal RNA small subunit methyltransferase G"/>
    <property type="match status" value="1"/>
</dbReference>
<dbReference type="Gene3D" id="3.40.50.150">
    <property type="entry name" value="Vaccinia Virus protein VP39"/>
    <property type="match status" value="1"/>
</dbReference>
<dbReference type="HAMAP" id="MF_00074">
    <property type="entry name" value="16SrRNA_methyltr_G"/>
    <property type="match status" value="1"/>
</dbReference>
<dbReference type="InterPro" id="IPR003682">
    <property type="entry name" value="rRNA_ssu_MeTfrase_G"/>
</dbReference>
<dbReference type="InterPro" id="IPR029063">
    <property type="entry name" value="SAM-dependent_MTases_sf"/>
</dbReference>
<dbReference type="NCBIfam" id="TIGR00138">
    <property type="entry name" value="rsmG_gidB"/>
    <property type="match status" value="1"/>
</dbReference>
<dbReference type="PANTHER" id="PTHR31760">
    <property type="entry name" value="S-ADENOSYL-L-METHIONINE-DEPENDENT METHYLTRANSFERASES SUPERFAMILY PROTEIN"/>
    <property type="match status" value="1"/>
</dbReference>
<dbReference type="PANTHER" id="PTHR31760:SF0">
    <property type="entry name" value="S-ADENOSYL-L-METHIONINE-DEPENDENT METHYLTRANSFERASES SUPERFAMILY PROTEIN"/>
    <property type="match status" value="1"/>
</dbReference>
<dbReference type="Pfam" id="PF02527">
    <property type="entry name" value="GidB"/>
    <property type="match status" value="1"/>
</dbReference>
<dbReference type="PIRSF" id="PIRSF003078">
    <property type="entry name" value="GidB"/>
    <property type="match status" value="1"/>
</dbReference>
<dbReference type="SUPFAM" id="SSF53335">
    <property type="entry name" value="S-adenosyl-L-methionine-dependent methyltransferases"/>
    <property type="match status" value="1"/>
</dbReference>